<protein>
    <recommendedName>
        <fullName>Linker for activation of T-cells family member 2</fullName>
    </recommendedName>
    <alternativeName>
        <fullName>Linker for activation of B-cells</fullName>
    </alternativeName>
    <alternativeName>
        <fullName>Membrane-associated adapter molecule</fullName>
    </alternativeName>
    <alternativeName>
        <fullName>Non-T-cell activation linker</fullName>
    </alternativeName>
    <alternativeName>
        <fullName>Williams-Beuren syndrome chromosomal region 15 protein</fullName>
    </alternativeName>
    <alternativeName>
        <fullName>Williams-Beuren syndrome chromosomal region 5 protein</fullName>
    </alternativeName>
</protein>
<comment type="function">
    <text evidence="6 7 9">Involved in FCER1 (high affinity immunoglobulin epsilon receptor)-mediated signaling in mast cells. May also be involved in BCR (B-cell antigen receptor)-mediated signaling in B-cells and FCGR1 (high affinity immunoglobulin gamma Fc receptor I)-mediated signaling in myeloid cells. Couples activation of these receptors and their associated kinases with distal intracellular events through the recruitment of GRB2.</text>
</comment>
<comment type="subunit">
    <text evidence="6 7 8">When phosphorylated, interacts with GRB2. May also interact with SOS1, GAB1 and CBL.</text>
</comment>
<comment type="subcellular location">
    <subcellularLocation>
        <location evidence="6 7">Cell membrane</location>
        <topology evidence="6 7">Single-pass type III membrane protein</topology>
    </subcellularLocation>
    <text>Present in lipid rafts.</text>
</comment>
<comment type="alternative products">
    <event type="alternative splicing"/>
    <isoform>
        <id>Q9GZY6-1</id>
        <name>1</name>
        <sequence type="displayed"/>
    </isoform>
    <isoform>
        <id>Q9GZY6-2</id>
        <name>2</name>
        <sequence type="described" ref="VSP_016643"/>
    </isoform>
</comment>
<comment type="tissue specificity">
    <text evidence="5 6 7 10">Highly expressed in spleen, peripheral blood lymphocytes, and germinal centers of lymph nodes. Also expressed in placenta, lung, pancreas and small intestine. Present in B-cells, NK cells and monocytes. Absent from T-cells (at protein level).</text>
</comment>
<comment type="PTM">
    <text evidence="6 7 8">Phosphorylated on tyrosines following cross-linking of BCR in B-cells, FCGR1 in myeloid cells, or FCER1 in mast cells; which induces the recruitment of GRB2.</text>
</comment>
<comment type="PTM">
    <text evidence="6">May be polyubiquitinated.</text>
</comment>
<comment type="disease">
    <text evidence="4 5 11">LAT2 is located in the Williams-Beuren syndrome (WBS) critical region. WBS results from a hemizygous deletion of several genes on chromosome 7q11.23, thought to arise as a consequence of unequal crossing over between highly homologous low-copy repeat sequences flanking the deleted region. Haploinsufficiency of LAT2 may be the cause of certain cardiovascular and musculo-skeletal abnormalities observed in the disease.</text>
</comment>
<comment type="sequence caution" evidence="13">
    <conflict type="frameshift">
        <sequence resource="EMBL-CDS" id="AAF29018"/>
    </conflict>
</comment>
<reference key="1">
    <citation type="journal article" date="2000" name="Cytogenet. Cell Genet.">
        <title>Divergent human and mouse orthologs of a novel gene (WBSCR15/Wbscr15) reside within the genomic interval commonly deleted in Williams syndrome.</title>
        <authorList>
            <person name="Doyle J.L."/>
            <person name="DeSilva U."/>
            <person name="Miller W."/>
            <person name="Green E.D."/>
        </authorList>
    </citation>
    <scope>NUCLEOTIDE SEQUENCE [MRNA] (ISOFORM 1)</scope>
    <scope>DISEASE</scope>
    <scope>TISSUE SPECIFICITY</scope>
</reference>
<reference key="2">
    <citation type="journal article" date="2000" name="Mamm. Genome">
        <title>Comparative genomic sequence analysis of the Williams syndrome region (LIMK1-RFC2) of human chromosome 7q11.23.</title>
        <authorList>
            <person name="Martindale D.W."/>
            <person name="Wilson M.D."/>
            <person name="Wang D."/>
            <person name="Burke R.D."/>
            <person name="Chen X."/>
            <person name="Duronio V."/>
            <person name="Koop B.F."/>
        </authorList>
    </citation>
    <scope>NUCLEOTIDE SEQUENCE [GENOMIC DNA]</scope>
    <scope>DISEASE</scope>
</reference>
<reference key="3">
    <citation type="journal article" date="2002" name="J. Exp. Med.">
        <title>Non-T cell activation linker (NTAL): a transmembrane adaptor protein involved in immunoreceptor signaling.</title>
        <authorList>
            <person name="Brdicka T."/>
            <person name="Imrich M."/>
            <person name="Angelisova P."/>
            <person name="Brdickova N."/>
            <person name="Horvath O."/>
            <person name="Spicka J."/>
            <person name="Hilgert I."/>
            <person name="Luskova P."/>
            <person name="Draber P."/>
            <person name="Novak P."/>
            <person name="Engels N."/>
            <person name="Wienands J."/>
            <person name="Simeoni L."/>
            <person name="Oesterreicher J."/>
            <person name="Aguado E."/>
            <person name="Malissen M."/>
            <person name="Schraven B."/>
            <person name="Horejsi V."/>
        </authorList>
    </citation>
    <scope>NUCLEOTIDE SEQUENCE [MRNA] (ISOFORM 1)</scope>
    <scope>IDENTIFICATION BY MASS SPECTROMETRY</scope>
    <scope>INTERACTION WITH GRB2; SOS1; GAB1 AND CBL</scope>
    <scope>TISSUE SPECIFICITY</scope>
    <scope>PALMITOYLATION AT CYS-25 AND CYS-28</scope>
    <scope>SUBCELLULAR LOCATION</scope>
    <scope>PHOSPHORYLATION AT TYR-136; TYR-193 AND TYR-233</scope>
    <scope>UBIQUITINATION</scope>
    <scope>FUNCTION</scope>
    <source>
        <tissue>Leukocyte</tissue>
    </source>
</reference>
<reference key="4">
    <citation type="journal article" date="2003" name="Nat. Immunol.">
        <title>LAB: a new membrane-associated adaptor molecule in B cell activation.</title>
        <authorList>
            <person name="Janssen E."/>
            <person name="Zhu M."/>
            <person name="Zhang W."/>
            <person name="Koonpaew S."/>
            <person name="Zhang W."/>
        </authorList>
    </citation>
    <scope>NUCLEOTIDE SEQUENCE [MRNA] (ISOFORM 1)</scope>
    <scope>TISSUE SPECIFICITY</scope>
    <scope>SUBCELLULAR LOCATION</scope>
    <scope>PHOSPHORYLATION</scope>
    <scope>INTERACTION WITH GRB2</scope>
    <scope>FUNCTION</scope>
    <source>
        <tissue>B-cell</tissue>
    </source>
</reference>
<reference key="5">
    <citation type="submission" date="2000-03" db="EMBL/GenBank/DDBJ databases">
        <title>A novel gene, WBS15, is deleted in patients with Williams syndrome.</title>
        <authorList>
            <person name="Tassabehji M."/>
            <person name="Heather L."/>
            <person name="Gladwin A."/>
            <person name="Metcalfe K."/>
            <person name="Donnai D."/>
            <person name="Read A."/>
            <person name="Wilmot C."/>
        </authorList>
    </citation>
    <scope>NUCLEOTIDE SEQUENCE [MRNA] (ISOFORMS 1 AND 2)</scope>
    <scope>DISEASE</scope>
</reference>
<reference key="6">
    <citation type="journal article" date="2000" name="Genome Res.">
        <title>Cloning and functional analysis of cDNAs with open reading frames for 300 previously undefined genes expressed in CD34+ hematopoietic stem/progenitor cells.</title>
        <authorList>
            <person name="Zhang Q.-H."/>
            <person name="Ye M."/>
            <person name="Wu X.-Y."/>
            <person name="Ren S.-X."/>
            <person name="Zhao M."/>
            <person name="Zhao C.-J."/>
            <person name="Fu G."/>
            <person name="Shen Y."/>
            <person name="Fan H.-Y."/>
            <person name="Lu G."/>
            <person name="Zhong M."/>
            <person name="Xu X.-R."/>
            <person name="Han Z.-G."/>
            <person name="Zhang J.-W."/>
            <person name="Tao J."/>
            <person name="Huang Q.-H."/>
            <person name="Zhou J."/>
            <person name="Hu G.-X."/>
            <person name="Gu J."/>
            <person name="Chen S.-J."/>
            <person name="Chen Z."/>
        </authorList>
    </citation>
    <scope>NUCLEOTIDE SEQUENCE [LARGE SCALE MRNA] (ISOFORM 1)</scope>
    <source>
        <tissue>Umbilical cord blood</tissue>
    </source>
</reference>
<reference key="7">
    <citation type="journal article" date="2004" name="Nat. Genet.">
        <title>Complete sequencing and characterization of 21,243 full-length human cDNAs.</title>
        <authorList>
            <person name="Ota T."/>
            <person name="Suzuki Y."/>
            <person name="Nishikawa T."/>
            <person name="Otsuki T."/>
            <person name="Sugiyama T."/>
            <person name="Irie R."/>
            <person name="Wakamatsu A."/>
            <person name="Hayashi K."/>
            <person name="Sato H."/>
            <person name="Nagai K."/>
            <person name="Kimura K."/>
            <person name="Makita H."/>
            <person name="Sekine M."/>
            <person name="Obayashi M."/>
            <person name="Nishi T."/>
            <person name="Shibahara T."/>
            <person name="Tanaka T."/>
            <person name="Ishii S."/>
            <person name="Yamamoto J."/>
            <person name="Saito K."/>
            <person name="Kawai Y."/>
            <person name="Isono Y."/>
            <person name="Nakamura Y."/>
            <person name="Nagahari K."/>
            <person name="Murakami K."/>
            <person name="Yasuda T."/>
            <person name="Iwayanagi T."/>
            <person name="Wagatsuma M."/>
            <person name="Shiratori A."/>
            <person name="Sudo H."/>
            <person name="Hosoiri T."/>
            <person name="Kaku Y."/>
            <person name="Kodaira H."/>
            <person name="Kondo H."/>
            <person name="Sugawara M."/>
            <person name="Takahashi M."/>
            <person name="Kanda K."/>
            <person name="Yokoi T."/>
            <person name="Furuya T."/>
            <person name="Kikkawa E."/>
            <person name="Omura Y."/>
            <person name="Abe K."/>
            <person name="Kamihara K."/>
            <person name="Katsuta N."/>
            <person name="Sato K."/>
            <person name="Tanikawa M."/>
            <person name="Yamazaki M."/>
            <person name="Ninomiya K."/>
            <person name="Ishibashi T."/>
            <person name="Yamashita H."/>
            <person name="Murakawa K."/>
            <person name="Fujimori K."/>
            <person name="Tanai H."/>
            <person name="Kimata M."/>
            <person name="Watanabe M."/>
            <person name="Hiraoka S."/>
            <person name="Chiba Y."/>
            <person name="Ishida S."/>
            <person name="Ono Y."/>
            <person name="Takiguchi S."/>
            <person name="Watanabe S."/>
            <person name="Yosida M."/>
            <person name="Hotuta T."/>
            <person name="Kusano J."/>
            <person name="Kanehori K."/>
            <person name="Takahashi-Fujii A."/>
            <person name="Hara H."/>
            <person name="Tanase T.-O."/>
            <person name="Nomura Y."/>
            <person name="Togiya S."/>
            <person name="Komai F."/>
            <person name="Hara R."/>
            <person name="Takeuchi K."/>
            <person name="Arita M."/>
            <person name="Imose N."/>
            <person name="Musashino K."/>
            <person name="Yuuki H."/>
            <person name="Oshima A."/>
            <person name="Sasaki N."/>
            <person name="Aotsuka S."/>
            <person name="Yoshikawa Y."/>
            <person name="Matsunawa H."/>
            <person name="Ichihara T."/>
            <person name="Shiohata N."/>
            <person name="Sano S."/>
            <person name="Moriya S."/>
            <person name="Momiyama H."/>
            <person name="Satoh N."/>
            <person name="Takami S."/>
            <person name="Terashima Y."/>
            <person name="Suzuki O."/>
            <person name="Nakagawa S."/>
            <person name="Senoh A."/>
            <person name="Mizoguchi H."/>
            <person name="Goto Y."/>
            <person name="Shimizu F."/>
            <person name="Wakebe H."/>
            <person name="Hishigaki H."/>
            <person name="Watanabe T."/>
            <person name="Sugiyama A."/>
            <person name="Takemoto M."/>
            <person name="Kawakami B."/>
            <person name="Yamazaki M."/>
            <person name="Watanabe K."/>
            <person name="Kumagai A."/>
            <person name="Itakura S."/>
            <person name="Fukuzumi Y."/>
            <person name="Fujimori Y."/>
            <person name="Komiyama M."/>
            <person name="Tashiro H."/>
            <person name="Tanigami A."/>
            <person name="Fujiwara T."/>
            <person name="Ono T."/>
            <person name="Yamada K."/>
            <person name="Fujii Y."/>
            <person name="Ozaki K."/>
            <person name="Hirao M."/>
            <person name="Ohmori Y."/>
            <person name="Kawabata A."/>
            <person name="Hikiji T."/>
            <person name="Kobatake N."/>
            <person name="Inagaki H."/>
            <person name="Ikema Y."/>
            <person name="Okamoto S."/>
            <person name="Okitani R."/>
            <person name="Kawakami T."/>
            <person name="Noguchi S."/>
            <person name="Itoh T."/>
            <person name="Shigeta K."/>
            <person name="Senba T."/>
            <person name="Matsumura K."/>
            <person name="Nakajima Y."/>
            <person name="Mizuno T."/>
            <person name="Morinaga M."/>
            <person name="Sasaki M."/>
            <person name="Togashi T."/>
            <person name="Oyama M."/>
            <person name="Hata H."/>
            <person name="Watanabe M."/>
            <person name="Komatsu T."/>
            <person name="Mizushima-Sugano J."/>
            <person name="Satoh T."/>
            <person name="Shirai Y."/>
            <person name="Takahashi Y."/>
            <person name="Nakagawa K."/>
            <person name="Okumura K."/>
            <person name="Nagase T."/>
            <person name="Nomura N."/>
            <person name="Kikuchi H."/>
            <person name="Masuho Y."/>
            <person name="Yamashita R."/>
            <person name="Nakai K."/>
            <person name="Yada T."/>
            <person name="Nakamura Y."/>
            <person name="Ohara O."/>
            <person name="Isogai T."/>
            <person name="Sugano S."/>
        </authorList>
    </citation>
    <scope>NUCLEOTIDE SEQUENCE [LARGE SCALE MRNA] (ISOFORM 1)</scope>
    <source>
        <tissue>Neutrophil</tissue>
        <tissue>Placenta</tissue>
        <tissue>Spleen</tissue>
        <tissue>Substantia nigra</tissue>
    </source>
</reference>
<reference key="8">
    <citation type="journal article" date="2003" name="Nature">
        <title>The DNA sequence of human chromosome 7.</title>
        <authorList>
            <person name="Hillier L.W."/>
            <person name="Fulton R.S."/>
            <person name="Fulton L.A."/>
            <person name="Graves T.A."/>
            <person name="Pepin K.H."/>
            <person name="Wagner-McPherson C."/>
            <person name="Layman D."/>
            <person name="Maas J."/>
            <person name="Jaeger S."/>
            <person name="Walker R."/>
            <person name="Wylie K."/>
            <person name="Sekhon M."/>
            <person name="Becker M.C."/>
            <person name="O'Laughlin M.D."/>
            <person name="Schaller M.E."/>
            <person name="Fewell G.A."/>
            <person name="Delehaunty K.D."/>
            <person name="Miner T.L."/>
            <person name="Nash W.E."/>
            <person name="Cordes M."/>
            <person name="Du H."/>
            <person name="Sun H."/>
            <person name="Edwards J."/>
            <person name="Bradshaw-Cordum H."/>
            <person name="Ali J."/>
            <person name="Andrews S."/>
            <person name="Isak A."/>
            <person name="Vanbrunt A."/>
            <person name="Nguyen C."/>
            <person name="Du F."/>
            <person name="Lamar B."/>
            <person name="Courtney L."/>
            <person name="Kalicki J."/>
            <person name="Ozersky P."/>
            <person name="Bielicki L."/>
            <person name="Scott K."/>
            <person name="Holmes A."/>
            <person name="Harkins R."/>
            <person name="Harris A."/>
            <person name="Strong C.M."/>
            <person name="Hou S."/>
            <person name="Tomlinson C."/>
            <person name="Dauphin-Kohlberg S."/>
            <person name="Kozlowicz-Reilly A."/>
            <person name="Leonard S."/>
            <person name="Rohlfing T."/>
            <person name="Rock S.M."/>
            <person name="Tin-Wollam A.-M."/>
            <person name="Abbott A."/>
            <person name="Minx P."/>
            <person name="Maupin R."/>
            <person name="Strowmatt C."/>
            <person name="Latreille P."/>
            <person name="Miller N."/>
            <person name="Johnson D."/>
            <person name="Murray J."/>
            <person name="Woessner J.P."/>
            <person name="Wendl M.C."/>
            <person name="Yang S.-P."/>
            <person name="Schultz B.R."/>
            <person name="Wallis J.W."/>
            <person name="Spieth J."/>
            <person name="Bieri T.A."/>
            <person name="Nelson J.O."/>
            <person name="Berkowicz N."/>
            <person name="Wohldmann P.E."/>
            <person name="Cook L.L."/>
            <person name="Hickenbotham M.T."/>
            <person name="Eldred J."/>
            <person name="Williams D."/>
            <person name="Bedell J.A."/>
            <person name="Mardis E.R."/>
            <person name="Clifton S.W."/>
            <person name="Chissoe S.L."/>
            <person name="Marra M.A."/>
            <person name="Raymond C."/>
            <person name="Haugen E."/>
            <person name="Gillett W."/>
            <person name="Zhou Y."/>
            <person name="James R."/>
            <person name="Phelps K."/>
            <person name="Iadanoto S."/>
            <person name="Bubb K."/>
            <person name="Simms E."/>
            <person name="Levy R."/>
            <person name="Clendenning J."/>
            <person name="Kaul R."/>
            <person name="Kent W.J."/>
            <person name="Furey T.S."/>
            <person name="Baertsch R.A."/>
            <person name="Brent M.R."/>
            <person name="Keibler E."/>
            <person name="Flicek P."/>
            <person name="Bork P."/>
            <person name="Suyama M."/>
            <person name="Bailey J.A."/>
            <person name="Portnoy M.E."/>
            <person name="Torrents D."/>
            <person name="Chinwalla A.T."/>
            <person name="Gish W.R."/>
            <person name="Eddy S.R."/>
            <person name="McPherson J.D."/>
            <person name="Olson M.V."/>
            <person name="Eichler E.E."/>
            <person name="Green E.D."/>
            <person name="Waterston R.H."/>
            <person name="Wilson R.K."/>
        </authorList>
    </citation>
    <scope>NUCLEOTIDE SEQUENCE [LARGE SCALE GENOMIC DNA]</scope>
</reference>
<reference key="9">
    <citation type="submission" date="2005-09" db="EMBL/GenBank/DDBJ databases">
        <authorList>
            <person name="Mural R.J."/>
            <person name="Istrail S."/>
            <person name="Sutton G.G."/>
            <person name="Florea L."/>
            <person name="Halpern A.L."/>
            <person name="Mobarry C.M."/>
            <person name="Lippert R."/>
            <person name="Walenz B."/>
            <person name="Shatkay H."/>
            <person name="Dew I."/>
            <person name="Miller J.R."/>
            <person name="Flanigan M.J."/>
            <person name="Edwards N.J."/>
            <person name="Bolanos R."/>
            <person name="Fasulo D."/>
            <person name="Halldorsson B.V."/>
            <person name="Hannenhalli S."/>
            <person name="Turner R."/>
            <person name="Yooseph S."/>
            <person name="Lu F."/>
            <person name="Nusskern D.R."/>
            <person name="Shue B.C."/>
            <person name="Zheng X.H."/>
            <person name="Zhong F."/>
            <person name="Delcher A.L."/>
            <person name="Huson D.H."/>
            <person name="Kravitz S.A."/>
            <person name="Mouchard L."/>
            <person name="Reinert K."/>
            <person name="Remington K.A."/>
            <person name="Clark A.G."/>
            <person name="Waterman M.S."/>
            <person name="Eichler E.E."/>
            <person name="Adams M.D."/>
            <person name="Hunkapiller M.W."/>
            <person name="Myers E.W."/>
            <person name="Venter J.C."/>
        </authorList>
    </citation>
    <scope>NUCLEOTIDE SEQUENCE [LARGE SCALE GENOMIC DNA]</scope>
</reference>
<reference key="10">
    <citation type="journal article" date="2004" name="Genome Res.">
        <title>The status, quality, and expansion of the NIH full-length cDNA project: the Mammalian Gene Collection (MGC).</title>
        <authorList>
            <consortium name="The MGC Project Team"/>
        </authorList>
    </citation>
    <scope>NUCLEOTIDE SEQUENCE [LARGE SCALE MRNA] (ISOFORM 1)</scope>
    <source>
        <tissue>B-cell</tissue>
        <tissue>Lymph</tissue>
    </source>
</reference>
<reference key="11">
    <citation type="journal article" date="2004" name="Blood">
        <title>NTAL phosphorylation is a pivotal link between the signaling cascades leading to human mast cell degranulation following Kit activation and Fc epsilon RI aggregation.</title>
        <authorList>
            <person name="Tkaczyk C."/>
            <person name="Horejsi V."/>
            <person name="Iwaki S."/>
            <person name="Draber P."/>
            <person name="Samelson L.E."/>
            <person name="Satterthwaite A.B."/>
            <person name="Nahm D.H."/>
            <person name="Metcalfe D.D."/>
            <person name="Gilfillan A.M."/>
        </authorList>
    </citation>
    <scope>FUNCTION</scope>
</reference>
<reference key="12">
    <citation type="journal article" date="2004" name="J. Biol. Chem.">
        <title>The importance of three membrane-distal tyrosines in the adaptor protein NTAL/LAB.</title>
        <authorList>
            <person name="Koonpaew S."/>
            <person name="Janssen E."/>
            <person name="Zhu M."/>
            <person name="Zhang W."/>
        </authorList>
    </citation>
    <scope>MUTAGENESIS OF TYR-58; TYR-84; TYR-95; TYR-110; TYR-118; TYR-136; TYR-193 AND TYR-233</scope>
    <scope>PHOSPHORYLATION AT TYR-136; TYR-193 AND TYR-233</scope>
    <scope>INTERACTION WITH GRB2</scope>
</reference>
<reference key="13">
    <citation type="journal article" date="2006" name="Blood">
        <title>Transmembrane adaptor molecules: a new category of lymphoid-cell markers.</title>
        <authorList>
            <person name="Tedoldi S."/>
            <person name="Paterson J.C."/>
            <person name="Hansmann M.-L."/>
            <person name="Natkunam Y."/>
            <person name="Rudiger T."/>
            <person name="Angelisova P."/>
            <person name="Du M.Q."/>
            <person name="Roberton H."/>
            <person name="Roncador G."/>
            <person name="Sanchez L."/>
            <person name="Pozzobon M."/>
            <person name="Masir N."/>
            <person name="Barry R."/>
            <person name="Pileri S."/>
            <person name="Mason D.Y."/>
            <person name="Marafioti T."/>
            <person name="Horejsi V."/>
        </authorList>
    </citation>
    <scope>TISSUE SPECIFICITY</scope>
</reference>
<reference key="14">
    <citation type="journal article" date="2008" name="J. Proteome Res.">
        <title>Phosphorylation analysis of primary human T lymphocytes using sequential IMAC and titanium oxide enrichment.</title>
        <authorList>
            <person name="Carrascal M."/>
            <person name="Ovelleiro D."/>
            <person name="Casas V."/>
            <person name="Gay M."/>
            <person name="Abian J."/>
        </authorList>
    </citation>
    <scope>IDENTIFICATION BY MASS SPECTROMETRY [LARGE SCALE ANALYSIS]</scope>
    <source>
        <tissue>T-cell</tissue>
    </source>
</reference>
<reference key="15">
    <citation type="journal article" date="2009" name="Mol. Cell. Proteomics">
        <title>Large-scale proteomics analysis of the human kinome.</title>
        <authorList>
            <person name="Oppermann F.S."/>
            <person name="Gnad F."/>
            <person name="Olsen J.V."/>
            <person name="Hornberger R."/>
            <person name="Greff Z."/>
            <person name="Keri G."/>
            <person name="Mann M."/>
            <person name="Daub H."/>
        </authorList>
    </citation>
    <scope>PHOSPHORYLATION [LARGE SCALE ANALYSIS] AT SER-44</scope>
    <scope>IDENTIFICATION BY MASS SPECTROMETRY [LARGE SCALE ANALYSIS]</scope>
</reference>
<reference key="16">
    <citation type="journal article" date="2015" name="Proteomics">
        <title>N-terminome analysis of the human mitochondrial proteome.</title>
        <authorList>
            <person name="Vaca Jacome A.S."/>
            <person name="Rabilloud T."/>
            <person name="Schaeffer-Reiss C."/>
            <person name="Rompais M."/>
            <person name="Ayoub D."/>
            <person name="Lane L."/>
            <person name="Bairoch A."/>
            <person name="Van Dorsselaer A."/>
            <person name="Carapito C."/>
        </authorList>
    </citation>
    <scope>IDENTIFICATION BY MASS SPECTROMETRY [LARGE SCALE ANALYSIS]</scope>
</reference>
<name>NTAL_HUMAN</name>
<accession>Q9GZY6</accession>
<accession>A6NFK6</accession>
<accession>A8K209</accession>
<accession>A8K4F1</accession>
<accession>D3DXF9</accession>
<accession>Q9BXX8</accession>
<accession>Q9NZY9</accession>
<proteinExistence type="evidence at protein level"/>
<keyword id="KW-0002">3D-structure</keyword>
<keyword id="KW-1064">Adaptive immunity</keyword>
<keyword id="KW-0025">Alternative splicing</keyword>
<keyword id="KW-1003">Cell membrane</keyword>
<keyword id="KW-0391">Immunity</keyword>
<keyword id="KW-0449">Lipoprotein</keyword>
<keyword id="KW-0467">Mast cell degranulation</keyword>
<keyword id="KW-0472">Membrane</keyword>
<keyword id="KW-0564">Palmitate</keyword>
<keyword id="KW-0597">Phosphoprotein</keyword>
<keyword id="KW-1267">Proteomics identification</keyword>
<keyword id="KW-1185">Reference proteome</keyword>
<keyword id="KW-0735">Signal-anchor</keyword>
<keyword id="KW-0812">Transmembrane</keyword>
<keyword id="KW-1133">Transmembrane helix</keyword>
<keyword id="KW-0832">Ubl conjugation</keyword>
<keyword id="KW-0856">Williams-Beuren syndrome</keyword>
<dbReference type="EMBL" id="AF257135">
    <property type="protein sequence ID" value="AAF91352.1"/>
    <property type="molecule type" value="mRNA"/>
</dbReference>
<dbReference type="EMBL" id="AF045555">
    <property type="protein sequence ID" value="AAF74978.1"/>
    <property type="molecule type" value="Genomic_DNA"/>
</dbReference>
<dbReference type="EMBL" id="AY190023">
    <property type="protein sequence ID" value="AAO63155.1"/>
    <property type="molecule type" value="mRNA"/>
</dbReference>
<dbReference type="EMBL" id="AF252611">
    <property type="protein sequence ID" value="AAK37429.1"/>
    <property type="molecule type" value="mRNA"/>
</dbReference>
<dbReference type="EMBL" id="AF252612">
    <property type="protein sequence ID" value="AAK37430.1"/>
    <property type="molecule type" value="mRNA"/>
</dbReference>
<dbReference type="EMBL" id="AF252613">
    <property type="protein sequence ID" value="AAK37633.1"/>
    <property type="molecule type" value="mRNA"/>
</dbReference>
<dbReference type="EMBL" id="AF252614">
    <property type="protein sequence ID" value="AAK37431.1"/>
    <property type="molecule type" value="mRNA"/>
</dbReference>
<dbReference type="EMBL" id="AF161531">
    <property type="protein sequence ID" value="AAF29018.1"/>
    <property type="status" value="ALT_FRAME"/>
    <property type="molecule type" value="mRNA"/>
</dbReference>
<dbReference type="EMBL" id="AK002099">
    <property type="protein sequence ID" value="BAA92084.1"/>
    <property type="molecule type" value="mRNA"/>
</dbReference>
<dbReference type="EMBL" id="AK092904">
    <property type="protein sequence ID" value="BAG52627.1"/>
    <property type="molecule type" value="mRNA"/>
</dbReference>
<dbReference type="EMBL" id="AK290074">
    <property type="protein sequence ID" value="BAF82763.1"/>
    <property type="molecule type" value="mRNA"/>
</dbReference>
<dbReference type="EMBL" id="AK290916">
    <property type="protein sequence ID" value="BAF83605.1"/>
    <property type="molecule type" value="mRNA"/>
</dbReference>
<dbReference type="EMBL" id="AC005081">
    <property type="protein sequence ID" value="AAS07404.1"/>
    <property type="molecule type" value="Genomic_DNA"/>
</dbReference>
<dbReference type="EMBL" id="AC005081">
    <property type="protein sequence ID" value="AAS07405.1"/>
    <property type="molecule type" value="Genomic_DNA"/>
</dbReference>
<dbReference type="EMBL" id="CH471200">
    <property type="protein sequence ID" value="EAW69610.1"/>
    <property type="molecule type" value="Genomic_DNA"/>
</dbReference>
<dbReference type="EMBL" id="CH471200">
    <property type="protein sequence ID" value="EAW69611.1"/>
    <property type="molecule type" value="Genomic_DNA"/>
</dbReference>
<dbReference type="EMBL" id="CH471200">
    <property type="protein sequence ID" value="EAW69612.1"/>
    <property type="molecule type" value="Genomic_DNA"/>
</dbReference>
<dbReference type="EMBL" id="CH471200">
    <property type="protein sequence ID" value="EAW69613.1"/>
    <property type="molecule type" value="Genomic_DNA"/>
</dbReference>
<dbReference type="EMBL" id="BC001609">
    <property type="protein sequence ID" value="AAH01609.1"/>
    <property type="molecule type" value="mRNA"/>
</dbReference>
<dbReference type="EMBL" id="BC009204">
    <property type="protein sequence ID" value="AAH09204.1"/>
    <property type="molecule type" value="mRNA"/>
</dbReference>
<dbReference type="CCDS" id="CCDS5566.2">
    <molecule id="Q9GZY6-1"/>
</dbReference>
<dbReference type="RefSeq" id="NP_054865.2">
    <molecule id="Q9GZY6-1"/>
    <property type="nucleotide sequence ID" value="NM_014146.3"/>
</dbReference>
<dbReference type="RefSeq" id="NP_115852.1">
    <molecule id="Q9GZY6-1"/>
    <property type="nucleotide sequence ID" value="NM_032463.3"/>
</dbReference>
<dbReference type="RefSeq" id="NP_115853.2">
    <molecule id="Q9GZY6-1"/>
    <property type="nucleotide sequence ID" value="NM_032464.3"/>
</dbReference>
<dbReference type="RefSeq" id="XP_011514860.1">
    <molecule id="Q9GZY6-1"/>
    <property type="nucleotide sequence ID" value="XM_011516558.2"/>
</dbReference>
<dbReference type="RefSeq" id="XP_054214915.1">
    <molecule id="Q9GZY6-1"/>
    <property type="nucleotide sequence ID" value="XM_054358940.1"/>
</dbReference>
<dbReference type="PDB" id="3MAZ">
    <property type="method" value="X-ray"/>
    <property type="resolution" value="1.90 A"/>
    <property type="chains" value="B=133-141"/>
</dbReference>
<dbReference type="PDBsum" id="3MAZ"/>
<dbReference type="SMR" id="Q9GZY6"/>
<dbReference type="BioGRID" id="113301">
    <property type="interactions" value="8"/>
</dbReference>
<dbReference type="FunCoup" id="Q9GZY6">
    <property type="interactions" value="247"/>
</dbReference>
<dbReference type="IntAct" id="Q9GZY6">
    <property type="interactions" value="1"/>
</dbReference>
<dbReference type="STRING" id="9606.ENSP00000381492"/>
<dbReference type="GlyGen" id="Q9GZY6">
    <property type="glycosylation" value="1 site"/>
</dbReference>
<dbReference type="iPTMnet" id="Q9GZY6"/>
<dbReference type="PhosphoSitePlus" id="Q9GZY6"/>
<dbReference type="SwissPalm" id="Q9GZY6"/>
<dbReference type="BioMuta" id="LAT2"/>
<dbReference type="CPTAC" id="CPTAC-972"/>
<dbReference type="jPOST" id="Q9GZY6"/>
<dbReference type="MassIVE" id="Q9GZY6"/>
<dbReference type="PaxDb" id="9606-ENSP00000420494"/>
<dbReference type="PeptideAtlas" id="Q9GZY6"/>
<dbReference type="ProteomicsDB" id="80174">
    <molecule id="Q9GZY6-1"/>
</dbReference>
<dbReference type="ProteomicsDB" id="80175">
    <molecule id="Q9GZY6-2"/>
</dbReference>
<dbReference type="Pumba" id="Q9GZY6"/>
<dbReference type="Antibodypedia" id="1198">
    <property type="antibodies" value="504 antibodies from 39 providers"/>
</dbReference>
<dbReference type="DNASU" id="7462"/>
<dbReference type="Ensembl" id="ENST00000275635.11">
    <molecule id="Q9GZY6-1"/>
    <property type="protein sequence ID" value="ENSP00000275635.7"/>
    <property type="gene ID" value="ENSG00000086730.17"/>
</dbReference>
<dbReference type="Ensembl" id="ENST00000344995.9">
    <molecule id="Q9GZY6-1"/>
    <property type="protein sequence ID" value="ENSP00000344881.5"/>
    <property type="gene ID" value="ENSG00000086730.17"/>
</dbReference>
<dbReference type="Ensembl" id="ENST00000398475.5">
    <molecule id="Q9GZY6-1"/>
    <property type="protein sequence ID" value="ENSP00000381492.1"/>
    <property type="gene ID" value="ENSG00000086730.17"/>
</dbReference>
<dbReference type="Ensembl" id="ENST00000460943.6">
    <molecule id="Q9GZY6-1"/>
    <property type="protein sequence ID" value="ENSP00000420494.1"/>
    <property type="gene ID" value="ENSG00000086730.17"/>
</dbReference>
<dbReference type="Ensembl" id="ENST00000488266.5">
    <molecule id="Q9GZY6-2"/>
    <property type="protein sequence ID" value="ENSP00000433807.1"/>
    <property type="gene ID" value="ENSG00000086730.17"/>
</dbReference>
<dbReference type="GeneID" id="7462"/>
<dbReference type="KEGG" id="hsa:7462"/>
<dbReference type="MANE-Select" id="ENST00000460943.6">
    <property type="protein sequence ID" value="ENSP00000420494.1"/>
    <property type="RefSeq nucleotide sequence ID" value="NM_032464.3"/>
    <property type="RefSeq protein sequence ID" value="NP_115853.2"/>
</dbReference>
<dbReference type="UCSC" id="uc003uag.4">
    <molecule id="Q9GZY6-1"/>
    <property type="organism name" value="human"/>
</dbReference>
<dbReference type="AGR" id="HGNC:12749"/>
<dbReference type="CTD" id="7462"/>
<dbReference type="DisGeNET" id="7462"/>
<dbReference type="GeneCards" id="LAT2"/>
<dbReference type="HGNC" id="HGNC:12749">
    <property type="gene designation" value="LAT2"/>
</dbReference>
<dbReference type="HPA" id="ENSG00000086730">
    <property type="expression patterns" value="Tissue enhanced (bone marrow, lymphoid tissue)"/>
</dbReference>
<dbReference type="MIM" id="605719">
    <property type="type" value="gene"/>
</dbReference>
<dbReference type="neXtProt" id="NX_Q9GZY6"/>
<dbReference type="OpenTargets" id="ENSG00000086730"/>
<dbReference type="PharmGKB" id="PA37356"/>
<dbReference type="VEuPathDB" id="HostDB:ENSG00000086730"/>
<dbReference type="eggNOG" id="ENOG502SH0N">
    <property type="taxonomic scope" value="Eukaryota"/>
</dbReference>
<dbReference type="GeneTree" id="ENSGT00390000006821"/>
<dbReference type="HOGENOM" id="CLU_099084_0_0_1"/>
<dbReference type="InParanoid" id="Q9GZY6"/>
<dbReference type="OMA" id="FMGSQTY"/>
<dbReference type="OrthoDB" id="9447847at2759"/>
<dbReference type="PAN-GO" id="Q9GZY6">
    <property type="GO annotations" value="4 GO annotations based on evolutionary models"/>
</dbReference>
<dbReference type="PhylomeDB" id="Q9GZY6"/>
<dbReference type="TreeFam" id="TF336203"/>
<dbReference type="PathwayCommons" id="Q9GZY6"/>
<dbReference type="Reactome" id="R-HSA-2730905">
    <property type="pathway name" value="Role of LAT2/NTAL/LAB on calcium mobilization"/>
</dbReference>
<dbReference type="SignaLink" id="Q9GZY6"/>
<dbReference type="SIGNOR" id="Q9GZY6"/>
<dbReference type="BioGRID-ORCS" id="7462">
    <property type="hits" value="13 hits in 1159 CRISPR screens"/>
</dbReference>
<dbReference type="ChiTaRS" id="LAT2">
    <property type="organism name" value="human"/>
</dbReference>
<dbReference type="EvolutionaryTrace" id="Q9GZY6"/>
<dbReference type="GeneWiki" id="LAT2"/>
<dbReference type="GenomeRNAi" id="7462"/>
<dbReference type="Pharos" id="Q9GZY6">
    <property type="development level" value="Tbio"/>
</dbReference>
<dbReference type="PRO" id="PR:Q9GZY6"/>
<dbReference type="Proteomes" id="UP000005640">
    <property type="component" value="Chromosome 7"/>
</dbReference>
<dbReference type="RNAct" id="Q9GZY6">
    <property type="molecule type" value="protein"/>
</dbReference>
<dbReference type="Bgee" id="ENSG00000086730">
    <property type="expression patterns" value="Expressed in monocyte and 154 other cell types or tissues"/>
</dbReference>
<dbReference type="ExpressionAtlas" id="Q9GZY6">
    <property type="expression patterns" value="baseline and differential"/>
</dbReference>
<dbReference type="GO" id="GO:0070062">
    <property type="term" value="C:extracellular exosome"/>
    <property type="evidence" value="ECO:0007005"/>
    <property type="project" value="UniProtKB"/>
</dbReference>
<dbReference type="GO" id="GO:0045121">
    <property type="term" value="C:membrane raft"/>
    <property type="evidence" value="ECO:0000314"/>
    <property type="project" value="HGNC-UCL"/>
</dbReference>
<dbReference type="GO" id="GO:0005886">
    <property type="term" value="C:plasma membrane"/>
    <property type="evidence" value="ECO:0000314"/>
    <property type="project" value="HPA"/>
</dbReference>
<dbReference type="GO" id="GO:0042169">
    <property type="term" value="F:SH2 domain binding"/>
    <property type="evidence" value="ECO:0000315"/>
    <property type="project" value="HGNC-UCL"/>
</dbReference>
<dbReference type="GO" id="GO:0002250">
    <property type="term" value="P:adaptive immune response"/>
    <property type="evidence" value="ECO:0007669"/>
    <property type="project" value="UniProtKB-KW"/>
</dbReference>
<dbReference type="GO" id="GO:0042113">
    <property type="term" value="P:B cell activation"/>
    <property type="evidence" value="ECO:0000314"/>
    <property type="project" value="HGNC-UCL"/>
</dbReference>
<dbReference type="GO" id="GO:0050853">
    <property type="term" value="P:B cell receptor signaling pathway"/>
    <property type="evidence" value="ECO:0000314"/>
    <property type="project" value="HGNC-UCL"/>
</dbReference>
<dbReference type="GO" id="GO:0019722">
    <property type="term" value="P:calcium-mediated signaling"/>
    <property type="evidence" value="ECO:0000316"/>
    <property type="project" value="HGNC-UCL"/>
</dbReference>
<dbReference type="GO" id="GO:0035556">
    <property type="term" value="P:intracellular signal transduction"/>
    <property type="evidence" value="ECO:0000316"/>
    <property type="project" value="HGNC-UCL"/>
</dbReference>
<dbReference type="GO" id="GO:0043303">
    <property type="term" value="P:mast cell degranulation"/>
    <property type="evidence" value="ECO:0007669"/>
    <property type="project" value="UniProtKB-KW"/>
</dbReference>
<dbReference type="InterPro" id="IPR031428">
    <property type="entry name" value="LAT2"/>
</dbReference>
<dbReference type="PANTHER" id="PTHR15646">
    <property type="entry name" value="LINKER FOR ACTIVATION OF T-CELLS FAMILY MEMBER 2"/>
    <property type="match status" value="1"/>
</dbReference>
<dbReference type="PANTHER" id="PTHR15646:SF5">
    <property type="entry name" value="LINKER FOR ACTIVATION OF T-CELLS FAMILY MEMBER 2"/>
    <property type="match status" value="1"/>
</dbReference>
<dbReference type="Pfam" id="PF15703">
    <property type="entry name" value="LAT2"/>
    <property type="match status" value="2"/>
</dbReference>
<organism>
    <name type="scientific">Homo sapiens</name>
    <name type="common">Human</name>
    <dbReference type="NCBI Taxonomy" id="9606"/>
    <lineage>
        <taxon>Eukaryota</taxon>
        <taxon>Metazoa</taxon>
        <taxon>Chordata</taxon>
        <taxon>Craniata</taxon>
        <taxon>Vertebrata</taxon>
        <taxon>Euteleostomi</taxon>
        <taxon>Mammalia</taxon>
        <taxon>Eutheria</taxon>
        <taxon>Euarchontoglires</taxon>
        <taxon>Primates</taxon>
        <taxon>Haplorrhini</taxon>
        <taxon>Catarrhini</taxon>
        <taxon>Hominidae</taxon>
        <taxon>Homo</taxon>
    </lineage>
</organism>
<sequence length="243" mass="26550">MSSGTELLWPGAALLVLLGVAASLCVRCSRPGAKRSEKIYQQRSLREDQQSFTGSRTYSLVGQAWPGPLADMAPTRKDKLLQFYPSLEDPASSRYQNFSKGSRHGSEEAYIDPIAMEYYNWGRFSKPPEDDDANSYENVLICKQKTTETGAQQEGIGGLCRGDLSLSLALKTGPTSGLCPSASPEEDEESEDYQNSASIHQWRESRKVMGQLQREASPGPVGSPDEEDGEPDYVNGEVAATEA</sequence>
<evidence type="ECO:0000250" key="1">
    <source>
        <dbReference type="UniProtKB" id="Q9JHL0"/>
    </source>
</evidence>
<evidence type="ECO:0000255" key="2"/>
<evidence type="ECO:0000256" key="3">
    <source>
        <dbReference type="SAM" id="MobiDB-lite"/>
    </source>
</evidence>
<evidence type="ECO:0000269" key="4">
    <source>
    </source>
</evidence>
<evidence type="ECO:0000269" key="5">
    <source>
    </source>
</evidence>
<evidence type="ECO:0000269" key="6">
    <source>
    </source>
</evidence>
<evidence type="ECO:0000269" key="7">
    <source>
    </source>
</evidence>
<evidence type="ECO:0000269" key="8">
    <source>
    </source>
</evidence>
<evidence type="ECO:0000269" key="9">
    <source>
    </source>
</evidence>
<evidence type="ECO:0000269" key="10">
    <source>
    </source>
</evidence>
<evidence type="ECO:0000269" key="11">
    <source ref="5"/>
</evidence>
<evidence type="ECO:0000303" key="12">
    <source ref="5"/>
</evidence>
<evidence type="ECO:0000305" key="13"/>
<evidence type="ECO:0000305" key="14">
    <source>
    </source>
</evidence>
<evidence type="ECO:0000305" key="15">
    <source>
    </source>
</evidence>
<evidence type="ECO:0007744" key="16">
    <source>
    </source>
</evidence>
<gene>
    <name type="primary">LAT2</name>
    <name type="synonym">LAB</name>
    <name type="synonym">NTAL</name>
    <name type="synonym">WBS15</name>
    <name type="synonym">WBSCR15</name>
    <name type="synonym">WBSCR5</name>
    <name type="ORF">HSPC046</name>
</gene>
<feature type="chain" id="PRO_0000083334" description="Linker for activation of T-cells family member 2">
    <location>
        <begin position="1"/>
        <end position="243"/>
    </location>
</feature>
<feature type="topological domain" description="Extracellular" evidence="2">
    <location>
        <begin position="1"/>
        <end position="5"/>
    </location>
</feature>
<feature type="transmembrane region" description="Helical; Signal-anchor for type III membrane protein" evidence="2">
    <location>
        <begin position="6"/>
        <end position="26"/>
    </location>
</feature>
<feature type="topological domain" description="Cytoplasmic" evidence="2">
    <location>
        <begin position="27"/>
        <end position="243"/>
    </location>
</feature>
<feature type="region of interest" description="Disordered" evidence="3">
    <location>
        <begin position="174"/>
        <end position="243"/>
    </location>
</feature>
<feature type="modified residue" description="Phosphoserine" evidence="16">
    <location>
        <position position="44"/>
    </location>
</feature>
<feature type="modified residue" description="Phosphotyrosine" evidence="1">
    <location>
        <position position="58"/>
    </location>
</feature>
<feature type="modified residue" description="Phosphoserine" evidence="1">
    <location>
        <position position="59"/>
    </location>
</feature>
<feature type="modified residue" description="Phosphoserine" evidence="1">
    <location>
        <position position="92"/>
    </location>
</feature>
<feature type="modified residue" description="Phosphotyrosine" evidence="14 15">
    <location>
        <position position="136"/>
    </location>
</feature>
<feature type="modified residue" description="Phosphotyrosine" evidence="14 15">
    <location>
        <position position="193"/>
    </location>
</feature>
<feature type="modified residue" description="Phosphotyrosine" evidence="6 8">
    <location>
        <position position="233"/>
    </location>
</feature>
<feature type="lipid moiety-binding region" description="S-palmitoyl cysteine" evidence="14">
    <location>
        <position position="25"/>
    </location>
</feature>
<feature type="lipid moiety-binding region" description="S-palmitoyl cysteine" evidence="14">
    <location>
        <position position="28"/>
    </location>
</feature>
<feature type="splice variant" id="VSP_016643" description="In isoform 2." evidence="12">
    <location>
        <begin position="112"/>
        <end position="243"/>
    </location>
</feature>
<feature type="mutagenesis site" description="No change in phosphorylation upon BCR activation." evidence="8">
    <original>Y</original>
    <variation>F</variation>
    <location>
        <position position="58"/>
    </location>
</feature>
<feature type="mutagenesis site" description="No change in phosphorylation upon BCR activation." evidence="8">
    <original>Y</original>
    <variation>F</variation>
    <location>
        <position position="84"/>
    </location>
</feature>
<feature type="mutagenesis site" description="Slightly reduces phosphorylation upon BCR activation." evidence="8">
    <original>Y</original>
    <variation>F</variation>
    <location>
        <position position="95"/>
    </location>
</feature>
<feature type="mutagenesis site" description="No change in phosphorylation upon BCR activation." evidence="8">
    <original>Y</original>
    <variation>F</variation>
    <location>
        <position position="110"/>
    </location>
</feature>
<feature type="mutagenesis site" description="No change in phosphorylation upon BCR activation." evidence="8">
    <original>Y</original>
    <variation>F</variation>
    <location>
        <position position="118"/>
    </location>
</feature>
<feature type="mutagenesis site" description="Slightly reduces phosphorylation upon BCR activation." evidence="8">
    <original>Y</original>
    <variation>F</variation>
    <location>
        <position position="136"/>
    </location>
</feature>
<feature type="mutagenesis site" description="Reduces phosphorylation upon BCR activation." evidence="8">
    <original>Y</original>
    <variation>F</variation>
    <location>
        <position position="193"/>
    </location>
</feature>
<feature type="mutagenesis site" description="Strongly reduces phosphorylation upon BCR activation." evidence="8">
    <original>Y</original>
    <variation>F</variation>
    <location>
        <position position="233"/>
    </location>
</feature>
<feature type="sequence conflict" description="In Ref. 7; BAF82763." evidence="13" ref="7">
    <original>I</original>
    <variation>M</variation>
    <location>
        <position position="39"/>
    </location>
</feature>
<feature type="sequence conflict" description="In Ref. 6; AAF29018." evidence="13" ref="6">
    <original>Q</original>
    <variation>A</variation>
    <location>
        <position position="82"/>
    </location>
</feature>
<feature type="sequence conflict" description="In Ref. 6; AAF29018." evidence="13" ref="6">
    <original>G</original>
    <variation>R</variation>
    <location>
        <position position="101"/>
    </location>
</feature>
<feature type="sequence conflict" description="In Ref. 6; AAF29018." evidence="13" ref="6">
    <original>V</original>
    <variation>M</variation>
    <location>
        <position position="221"/>
    </location>
</feature>